<keyword id="KW-0002">3D-structure</keyword>
<keyword id="KW-0042">Antenna complex</keyword>
<keyword id="KW-0903">Direct protein sequencing</keyword>
<keyword id="KW-0472">Membrane</keyword>
<keyword id="KW-0605">Phycobilisome</keyword>
<keyword id="KW-1185">Reference proteome</keyword>
<keyword id="KW-0793">Thylakoid</keyword>
<keyword id="KW-0812">Transmembrane</keyword>
<keyword id="KW-1133">Transmembrane helix</keyword>
<feature type="initiator methionine" description="Removed" evidence="6">
    <location>
        <position position="1"/>
    </location>
</feature>
<feature type="chain" id="PRO_0000449925" description="Photosystem I-associated linker protein CpcL">
    <location>
        <begin position="2"/>
        <end position="249"/>
    </location>
</feature>
<feature type="transmembrane region" description="Helical" evidence="1">
    <location>
        <begin position="223"/>
        <end position="247"/>
    </location>
</feature>
<feature type="domain" description="PBS-linker" evidence="2">
    <location>
        <begin position="11"/>
        <end position="189"/>
    </location>
</feature>
<dbReference type="EMBL" id="BA000022">
    <property type="protein sequence ID" value="BAA18734.1"/>
    <property type="molecule type" value="Genomic_DNA"/>
</dbReference>
<dbReference type="PIR" id="S76822">
    <property type="entry name" value="S76822"/>
</dbReference>
<dbReference type="PDB" id="8HFQ">
    <property type="method" value="EM"/>
    <property type="resolution" value="2.64 A"/>
    <property type="chains" value="n=1-249"/>
</dbReference>
<dbReference type="PDBsum" id="8HFQ"/>
<dbReference type="EMDB" id="EMD-34724"/>
<dbReference type="SMR" id="P74625"/>
<dbReference type="IntAct" id="P74625">
    <property type="interactions" value="4"/>
</dbReference>
<dbReference type="STRING" id="1148.gene:10500506"/>
<dbReference type="PaxDb" id="1148-1653823"/>
<dbReference type="EnsemblBacteria" id="BAA18734">
    <property type="protein sequence ID" value="BAA18734"/>
    <property type="gene ID" value="BAA18734"/>
</dbReference>
<dbReference type="KEGG" id="syn:sll1471"/>
<dbReference type="eggNOG" id="COG0448">
    <property type="taxonomic scope" value="Bacteria"/>
</dbReference>
<dbReference type="InParanoid" id="P74625"/>
<dbReference type="PhylomeDB" id="P74625"/>
<dbReference type="Proteomes" id="UP000001425">
    <property type="component" value="Chromosome"/>
</dbReference>
<dbReference type="GO" id="GO:0030089">
    <property type="term" value="C:phycobilisome"/>
    <property type="evidence" value="ECO:0007669"/>
    <property type="project" value="UniProtKB-KW"/>
</dbReference>
<dbReference type="GO" id="GO:0031676">
    <property type="term" value="C:plasma membrane-derived thylakoid membrane"/>
    <property type="evidence" value="ECO:0007669"/>
    <property type="project" value="UniProtKB-SubCell"/>
</dbReference>
<dbReference type="GO" id="GO:0015979">
    <property type="term" value="P:photosynthesis"/>
    <property type="evidence" value="ECO:0007669"/>
    <property type="project" value="InterPro"/>
</dbReference>
<dbReference type="Gene3D" id="1.10.3130.20">
    <property type="entry name" value="Phycobilisome linker domain"/>
    <property type="match status" value="1"/>
</dbReference>
<dbReference type="InterPro" id="IPR001297">
    <property type="entry name" value="PBS_linker_dom"/>
</dbReference>
<dbReference type="InterPro" id="IPR038255">
    <property type="entry name" value="PBS_linker_sf"/>
</dbReference>
<dbReference type="InterPro" id="IPR016470">
    <property type="entry name" value="Phycobilisome"/>
</dbReference>
<dbReference type="PANTHER" id="PTHR34011">
    <property type="entry name" value="PHYCOBILISOME 32.1 KDA LINKER POLYPEPTIDE, PHYCOCYANIN-ASSOCIATED, ROD 2-RELATED"/>
    <property type="match status" value="1"/>
</dbReference>
<dbReference type="Pfam" id="PF00427">
    <property type="entry name" value="PBS_linker_poly"/>
    <property type="match status" value="1"/>
</dbReference>
<dbReference type="PIRSF" id="PIRSF005898">
    <property type="entry name" value="Phycobilisome_CpeC/CpcI"/>
    <property type="match status" value="1"/>
</dbReference>
<dbReference type="PROSITE" id="PS51445">
    <property type="entry name" value="PBS_LINKER"/>
    <property type="match status" value="1"/>
</dbReference>
<gene>
    <name evidence="8" type="primary">cpcL</name>
    <name evidence="7" type="synonym">cpcG2</name>
    <name type="ordered locus">sll1471</name>
</gene>
<evidence type="ECO:0000255" key="1"/>
<evidence type="ECO:0000255" key="2">
    <source>
        <dbReference type="PROSITE-ProRule" id="PRU00775"/>
    </source>
</evidence>
<evidence type="ECO:0000269" key="3">
    <source>
    </source>
</evidence>
<evidence type="ECO:0000269" key="4">
    <source>
    </source>
</evidence>
<evidence type="ECO:0000269" key="5">
    <source>
    </source>
</evidence>
<evidence type="ECO:0000269" key="6">
    <source>
    </source>
</evidence>
<evidence type="ECO:0000303" key="7">
    <source>
    </source>
</evidence>
<evidence type="ECO:0000303" key="8">
    <source>
    </source>
</evidence>
<comment type="function">
    <text evidence="3 4 5">Rod linker protein, associated with phycocyanin. Linker polypeptides determine the state of aggregation and the location of the disk-shaped phycobiliprotein units within the phycobilisome and modulate their spectroscopic properties in order to mediate a directed and optimal energy transfer. Plays a role in energy transfer from the phycobilisome to photosystem I (PSI). Although able to transfer energy to both photosystems, this is predominantly a PSI antenna (PubMed:16049785, PubMed:17468217, PubMed:19152018).</text>
</comment>
<comment type="subunit">
    <text evidence="3 4 6">Part of a specialized phycobilisome (PBS), a structure that is usually composed of two distinct substructures: a core complex and a number of rods radiating from the core. This protein is part of a core-less PBS rod (called CpcL-PBS) with on average 5 stacked phycocyanin hexamers (PC, CpcA and CpcB). Linker CpcL connects the PC stack to the thylakoid, the hexamers are linked by 1 copy of CpcC1, 3 copies of CpcC2 and the stack is terminated by a single copy of CpcD. Ferredoxin--NADP reductase (petH) is also part of the complex. CpcL-PBS has no central core proteins (allophycocyanin ApcA, ApcB) nor phycobiliprotein ApcE.</text>
</comment>
<comment type="subcellular location">
    <subcellularLocation>
        <location evidence="4">Cellular thylakoid membrane</location>
        <topology evidence="1">Single-pass membrane protein</topology>
    </subcellularLocation>
    <text evidence="3 4 6">Unlike the major phycobilisome supercomplex, this protein is tightly associated with the thylakoid membrane (PubMed:17468217). Part of the PBS rod (PubMed:16049785, PubMed:17468217, PubMed:31015331).</text>
</comment>
<comment type="disruption phenotype">
    <text evidence="3 4 5">No visible growth phenotype, decreased energy transfer to photosystem I. Decreased accumulation of phycocyanin (PC), but no major effects on the phycobilisome supercomplex. A double cpcG1/cpcG2 deletion has even less PC (PubMed:16049785, PubMed:17468217). No change in state 2 to state 1 transitions (i.e. energy transfer to PSII) (PubMed:19152018).</text>
</comment>
<comment type="similarity">
    <text evidence="2">Belongs to the phycobilisome linker protein family.</text>
</comment>
<proteinExistence type="evidence at protein level"/>
<accession>P74625</accession>
<sequence length="249" mass="28523">MTLPLIAYAPVSQNQRVTNYEVSGDEHARIFTTEGTLSPSAMDNLIAAAYRQVFNEQQMIQSNRQIALESQFKNQQITVRDFIRGLALSDSFRRRNFEVNNNYRFVQMCIQRLLGRDVYSEEEKIAWSIVIATKGLPGFINELLNSQEYLENFGYDTVPYQRRRILPQRISGELPFARMPRYGADHREKLEAIGYFRNQAPLTYRWEWQKQPYPAGVYLAGKVVLYVGGALVSLGIIAVALSAWGIIGL</sequence>
<organism>
    <name type="scientific">Synechocystis sp. (strain ATCC 27184 / PCC 6803 / Kazusa)</name>
    <dbReference type="NCBI Taxonomy" id="1111708"/>
    <lineage>
        <taxon>Bacteria</taxon>
        <taxon>Bacillati</taxon>
        <taxon>Cyanobacteriota</taxon>
        <taxon>Cyanophyceae</taxon>
        <taxon>Synechococcales</taxon>
        <taxon>Merismopediaceae</taxon>
        <taxon>Synechocystis</taxon>
    </lineage>
</organism>
<protein>
    <recommendedName>
        <fullName evidence="8">Photosystem I-associated linker protein CpcL</fullName>
    </recommendedName>
    <alternativeName>
        <fullName evidence="7">Phycobilisome rod-core linker polypeptide CpcG2</fullName>
    </alternativeName>
</protein>
<reference key="1">
    <citation type="journal article" date="1996" name="DNA Res.">
        <title>Sequence analysis of the genome of the unicellular cyanobacterium Synechocystis sp. strain PCC6803. II. Sequence determination of the entire genome and assignment of potential protein-coding regions.</title>
        <authorList>
            <person name="Kaneko T."/>
            <person name="Sato S."/>
            <person name="Kotani H."/>
            <person name="Tanaka A."/>
            <person name="Asamizu E."/>
            <person name="Nakamura Y."/>
            <person name="Miyajima N."/>
            <person name="Hirosawa M."/>
            <person name="Sugiura M."/>
            <person name="Sasamoto S."/>
            <person name="Kimura T."/>
            <person name="Hosouchi T."/>
            <person name="Matsuno A."/>
            <person name="Muraki A."/>
            <person name="Nakazaki N."/>
            <person name="Naruo K."/>
            <person name="Okumura S."/>
            <person name="Shimpo S."/>
            <person name="Takeuchi C."/>
            <person name="Wada T."/>
            <person name="Watanabe A."/>
            <person name="Yamada M."/>
            <person name="Yasuda M."/>
            <person name="Tabata S."/>
        </authorList>
    </citation>
    <scope>NUCLEOTIDE SEQUENCE [LARGE SCALE GENOMIC DNA]</scope>
    <source>
        <strain>ATCC 27184 / PCC 6803 / Kazusa</strain>
    </source>
</reference>
<reference key="2">
    <citation type="journal article" date="2019" name="MBio">
        <title>Phycobilisomes Harbor FNRL in Cyanobacteria.</title>
        <authorList>
            <person name="Liu H."/>
            <person name="Weisz D.A."/>
            <person name="Zhang M.M."/>
            <person name="Cheng M."/>
            <person name="Zhang B."/>
            <person name="Zhang H."/>
            <person name="Gerstenecker G.S."/>
            <person name="Pakrasi H.B."/>
            <person name="Gross M.L."/>
            <person name="Blankenship R.E."/>
        </authorList>
    </citation>
    <scope>PROTEIN SEQUENCE OF 2-16</scope>
    <scope>SUBUNIT</scope>
    <scope>SUBCELLULAR LOCATION</scope>
    <source>
        <strain>ATCC 27184 / PCC 6803 / Kazusa</strain>
    </source>
</reference>
<reference key="3">
    <citation type="journal article" date="2005" name="Photosyn. Res.">
        <title>Distinct roles of CpcG1 and CpcG2 in phycobilisome assembly in the cyanobacterium Synechocystis sp. PCC 6803.</title>
        <authorList>
            <person name="Kondo K."/>
            <person name="Geng X.X."/>
            <person name="Katayama M."/>
            <person name="Ikeuchi M."/>
        </authorList>
    </citation>
    <scope>FUNCTION</scope>
    <scope>SUBUNIT</scope>
    <scope>SUBCELLULAR LOCATION</scope>
    <scope>DISRUPTION PHENOTYPE</scope>
    <source>
        <strain>ATCC 27184 / PCC 6803 / Kazusa</strain>
    </source>
</reference>
<reference key="4">
    <citation type="journal article" date="2007" name="Plant Physiol.">
        <title>The membrane-associated CpcG2-phycobilisome in Synechocystis: a new photosystem I antenna.</title>
        <authorList>
            <person name="Kondo K."/>
            <person name="Ochiai Y."/>
            <person name="Katayama M."/>
            <person name="Ikeuchi M."/>
        </authorList>
    </citation>
    <scope>FUNCTION</scope>
    <scope>SUBUNIT</scope>
    <scope>SUBCELLULAR LOCATION</scope>
    <scope>DISRUPTION PHENOTYPE</scope>
</reference>
<reference key="5">
    <citation type="journal article" date="2009" name="Photosyn. Res.">
        <title>Distinct roles of CpcG1-phycobilisome and CpcG2-phycobilisome in state transitions in a cyanobacterium Synechocystis sp. PCC 6803.</title>
        <authorList>
            <person name="Kondo K."/>
            <person name="Mullineaux C.W."/>
            <person name="Ikeuchi M."/>
        </authorList>
    </citation>
    <scope>FUNCTION</scope>
    <scope>DISRUPTION PHENOTYPE</scope>
    <source>
        <strain>ATCC 27184 / PCC 6803 / Kazusa</strain>
    </source>
</reference>
<name>CPCL_SYNY3</name>